<sequence>MEKKTDEVFDALFKLEEIRQILRDSLPTGLDNDEKEAWKSKLSELNEIVQKLDSESVTRPLKKIAGTIEIRSREENYINIQPIQAAGRLTLEARKAIIAYGDGYSTCDTCRKPFRLDKISKPPIGDFHTELARFVNMDQARVVPGARRGFQAVAQTMVQRGDSVIVSSFAHYTEFLAVEGAGGQVREVPVDKNNLITADATATKIEDVIRETGKNPALVMMDHIDYQVANEHDVTGIAKVAHQYDIPFLYNGAYTVGIMPVDGKAIGADFVVGSGHKSMASPAPSGMLATTDEWAPKVLRTTQMVGDLTSRKFGVKEVEMLGCTLMGSNLIAMMASFPEVQKRTQNWDDEVKKSNYFIDALLTIEGSRVLSEYPRKHALSKVDTTGSFDIVAKTHKRKGFYFSDELSARGIVGEFAGATRTWKLSTYGLSWKKVQYLADAFTEIAEKYELPLKSKT</sequence>
<comment type="function">
    <text evidence="1">Converts O-phospho-L-seryl-tRNA(Cys) (Sep-tRNA(Cys)) to L-cysteinyl-tRNA(Cys) (Cys-tRNA(Cys)).</text>
</comment>
<comment type="catalytic activity">
    <reaction evidence="1">
        <text>O-phospho-L-seryl-tRNA(Cys) + hydrogen sulfide + H(+) = L-cysteinyl-tRNA(Cys) + phosphate</text>
        <dbReference type="Rhea" id="RHEA:25686"/>
        <dbReference type="Rhea" id="RHEA-COMP:9679"/>
        <dbReference type="Rhea" id="RHEA-COMP:9719"/>
        <dbReference type="ChEBI" id="CHEBI:15378"/>
        <dbReference type="ChEBI" id="CHEBI:29919"/>
        <dbReference type="ChEBI" id="CHEBI:43474"/>
        <dbReference type="ChEBI" id="CHEBI:78517"/>
        <dbReference type="ChEBI" id="CHEBI:78551"/>
        <dbReference type="EC" id="2.5.1.73"/>
    </reaction>
</comment>
<comment type="cofactor">
    <cofactor evidence="1">
        <name>pyridoxal 5'-phosphate</name>
        <dbReference type="ChEBI" id="CHEBI:597326"/>
    </cofactor>
</comment>
<comment type="subunit">
    <text evidence="1">Homodimer. Interacts with SepRS.</text>
</comment>
<comment type="similarity">
    <text evidence="1">Belongs to the SepCysS family.</text>
</comment>
<gene>
    <name type="ordered locus">Mhun_2180</name>
</gene>
<organism>
    <name type="scientific">Methanospirillum hungatei JF-1 (strain ATCC 27890 / DSM 864 / NBRC 100397 / JF-1)</name>
    <dbReference type="NCBI Taxonomy" id="323259"/>
    <lineage>
        <taxon>Archaea</taxon>
        <taxon>Methanobacteriati</taxon>
        <taxon>Methanobacteriota</taxon>
        <taxon>Stenosarchaea group</taxon>
        <taxon>Methanomicrobia</taxon>
        <taxon>Methanomicrobiales</taxon>
        <taxon>Methanospirillaceae</taxon>
        <taxon>Methanospirillum</taxon>
    </lineage>
</organism>
<protein>
    <recommendedName>
        <fullName evidence="1">O-phospho-L-seryl-tRNA:Cys-tRNA synthase 2</fullName>
        <ecNumber evidence="1">2.5.1.73</ecNumber>
    </recommendedName>
    <alternativeName>
        <fullName evidence="1">Sep-tRNA:Cys-tRNA synthase 2</fullName>
        <shortName evidence="1">SepCysS 2</shortName>
    </alternativeName>
</protein>
<feature type="chain" id="PRO_0000359464" description="O-phospho-L-seryl-tRNA:Cys-tRNA synthase 2">
    <location>
        <begin position="1"/>
        <end position="456"/>
    </location>
</feature>
<feature type="binding site" evidence="1">
    <location>
        <begin position="146"/>
        <end position="147"/>
    </location>
    <ligand>
        <name>pyridoxal 5'-phosphate</name>
        <dbReference type="ChEBI" id="CHEBI:597326"/>
    </ligand>
</feature>
<feature type="binding site" evidence="1">
    <location>
        <position position="251"/>
    </location>
    <ligand>
        <name>pyridoxal 5'-phosphate</name>
        <dbReference type="ChEBI" id="CHEBI:597326"/>
    </ligand>
</feature>
<feature type="binding site" evidence="1">
    <location>
        <begin position="274"/>
        <end position="276"/>
    </location>
    <ligand>
        <name>pyridoxal 5'-phosphate</name>
        <dbReference type="ChEBI" id="CHEBI:597326"/>
    </ligand>
</feature>
<feature type="modified residue" description="N6-(pyridoxal phosphate)lysine" evidence="1">
    <location>
        <position position="277"/>
    </location>
</feature>
<name>SPSS2_METHJ</name>
<reference key="1">
    <citation type="journal article" date="2016" name="Stand. Genomic Sci.">
        <title>Complete genome sequence of Methanospirillum hungatei type strain JF1.</title>
        <authorList>
            <person name="Gunsalus R.P."/>
            <person name="Cook L.E."/>
            <person name="Crable B."/>
            <person name="Rohlin L."/>
            <person name="McDonald E."/>
            <person name="Mouttaki H."/>
            <person name="Sieber J.R."/>
            <person name="Poweleit N."/>
            <person name="Zhou H."/>
            <person name="Lapidus A.L."/>
            <person name="Daligault H.E."/>
            <person name="Land M."/>
            <person name="Gilna P."/>
            <person name="Ivanova N."/>
            <person name="Kyrpides N."/>
            <person name="Culley D.E."/>
            <person name="McInerney M.J."/>
        </authorList>
    </citation>
    <scope>NUCLEOTIDE SEQUENCE [LARGE SCALE GENOMIC DNA]</scope>
    <source>
        <strain>ATCC 27890 / DSM 864 / NBRC 100397 / JF-1</strain>
    </source>
</reference>
<evidence type="ECO:0000255" key="1">
    <source>
        <dbReference type="HAMAP-Rule" id="MF_01675"/>
    </source>
</evidence>
<accession>Q2FTY4</accession>
<keyword id="KW-0648">Protein biosynthesis</keyword>
<keyword id="KW-0663">Pyridoxal phosphate</keyword>
<keyword id="KW-1185">Reference proteome</keyword>
<keyword id="KW-0808">Transferase</keyword>
<proteinExistence type="inferred from homology"/>
<dbReference type="EC" id="2.5.1.73" evidence="1"/>
<dbReference type="EMBL" id="CP000254">
    <property type="protein sequence ID" value="ABD41885.1"/>
    <property type="molecule type" value="Genomic_DNA"/>
</dbReference>
<dbReference type="RefSeq" id="WP_011449143.1">
    <property type="nucleotide sequence ID" value="NC_007796.1"/>
</dbReference>
<dbReference type="SMR" id="Q2FTY4"/>
<dbReference type="FunCoup" id="Q2FTY4">
    <property type="interactions" value="21"/>
</dbReference>
<dbReference type="STRING" id="323259.Mhun_2180"/>
<dbReference type="EnsemblBacteria" id="ABD41885">
    <property type="protein sequence ID" value="ABD41885"/>
    <property type="gene ID" value="Mhun_2180"/>
</dbReference>
<dbReference type="GeneID" id="3922985"/>
<dbReference type="KEGG" id="mhu:Mhun_2180"/>
<dbReference type="eggNOG" id="arCOG00091">
    <property type="taxonomic scope" value="Archaea"/>
</dbReference>
<dbReference type="HOGENOM" id="CLU_060476_0_0_2"/>
<dbReference type="InParanoid" id="Q2FTY4"/>
<dbReference type="OrthoDB" id="5817at2157"/>
<dbReference type="Proteomes" id="UP000001941">
    <property type="component" value="Chromosome"/>
</dbReference>
<dbReference type="GO" id="GO:0043766">
    <property type="term" value="F:Sep-tRNA:Cys-tRNA synthase activity"/>
    <property type="evidence" value="ECO:0007669"/>
    <property type="project" value="UniProtKB-UniRule"/>
</dbReference>
<dbReference type="GO" id="GO:0006412">
    <property type="term" value="P:translation"/>
    <property type="evidence" value="ECO:0007669"/>
    <property type="project" value="UniProtKB-KW"/>
</dbReference>
<dbReference type="Gene3D" id="3.90.1150.10">
    <property type="entry name" value="Aspartate Aminotransferase, domain 1"/>
    <property type="match status" value="1"/>
</dbReference>
<dbReference type="Gene3D" id="3.40.640.10">
    <property type="entry name" value="Type I PLP-dependent aspartate aminotransferase-like (Major domain)"/>
    <property type="match status" value="1"/>
</dbReference>
<dbReference type="HAMAP" id="MF_01675">
    <property type="entry name" value="Sep_Cys_tRNA_synth"/>
    <property type="match status" value="1"/>
</dbReference>
<dbReference type="InterPro" id="IPR015424">
    <property type="entry name" value="PyrdxlP-dep_Trfase"/>
</dbReference>
<dbReference type="InterPro" id="IPR015421">
    <property type="entry name" value="PyrdxlP-dep_Trfase_major"/>
</dbReference>
<dbReference type="InterPro" id="IPR015422">
    <property type="entry name" value="PyrdxlP-dep_Trfase_small"/>
</dbReference>
<dbReference type="InterPro" id="IPR013375">
    <property type="entry name" value="Sep_Cys-tRNA_synth_arc"/>
</dbReference>
<dbReference type="InterPro" id="IPR008829">
    <property type="entry name" value="SepSecS/SepCysS"/>
</dbReference>
<dbReference type="NCBIfam" id="NF006810">
    <property type="entry name" value="PRK09331.1"/>
    <property type="match status" value="1"/>
</dbReference>
<dbReference type="NCBIfam" id="TIGR02539">
    <property type="entry name" value="SepCysS"/>
    <property type="match status" value="1"/>
</dbReference>
<dbReference type="PANTHER" id="PTHR43586">
    <property type="entry name" value="CYSTEINE DESULFURASE"/>
    <property type="match status" value="1"/>
</dbReference>
<dbReference type="PANTHER" id="PTHR43586:SF3">
    <property type="entry name" value="O-PHOSPHO-L-SERYL-TRNA:CYS-TRNA SYNTHASE"/>
    <property type="match status" value="1"/>
</dbReference>
<dbReference type="Pfam" id="PF05889">
    <property type="entry name" value="SepSecS"/>
    <property type="match status" value="1"/>
</dbReference>
<dbReference type="SUPFAM" id="SSF53383">
    <property type="entry name" value="PLP-dependent transferases"/>
    <property type="match status" value="1"/>
</dbReference>